<proteinExistence type="evidence at protein level"/>
<name>NOMT_ORYSJ</name>
<organism>
    <name type="scientific">Oryza sativa subsp. japonica</name>
    <name type="common">Rice</name>
    <dbReference type="NCBI Taxonomy" id="39947"/>
    <lineage>
        <taxon>Eukaryota</taxon>
        <taxon>Viridiplantae</taxon>
        <taxon>Streptophyta</taxon>
        <taxon>Embryophyta</taxon>
        <taxon>Tracheophyta</taxon>
        <taxon>Spermatophyta</taxon>
        <taxon>Magnoliopsida</taxon>
        <taxon>Liliopsida</taxon>
        <taxon>Poales</taxon>
        <taxon>Poaceae</taxon>
        <taxon>BOP clade</taxon>
        <taxon>Oryzoideae</taxon>
        <taxon>Oryzeae</taxon>
        <taxon>Oryzinae</taxon>
        <taxon>Oryza</taxon>
        <taxon>Oryza sativa</taxon>
    </lineage>
</organism>
<feature type="chain" id="PRO_0000418734" description="Naringenin 7-O-methyltransferase">
    <location>
        <begin position="1"/>
        <end position="375"/>
    </location>
</feature>
<feature type="region of interest" description="Substrate binding" evidence="1">
    <location>
        <begin position="168"/>
        <end position="188"/>
    </location>
</feature>
<feature type="active site" description="Proton acceptor" evidence="2">
    <location>
        <position position="280"/>
    </location>
</feature>
<feature type="binding site" evidence="1">
    <location>
        <begin position="136"/>
        <end position="142"/>
    </location>
    <ligand>
        <name>substrate</name>
    </ligand>
</feature>
<feature type="binding site" evidence="2">
    <location>
        <position position="219"/>
    </location>
    <ligand>
        <name>S-adenosyl-L-methionine</name>
        <dbReference type="ChEBI" id="CHEBI:59789"/>
    </ligand>
</feature>
<feature type="binding site" evidence="2">
    <location>
        <position position="242"/>
    </location>
    <ligand>
        <name>S-adenosyl-L-methionine</name>
        <dbReference type="ChEBI" id="CHEBI:59789"/>
    </ligand>
</feature>
<feature type="binding site" evidence="2">
    <location>
        <position position="263"/>
    </location>
    <ligand>
        <name>S-adenosyl-L-methionine</name>
        <dbReference type="ChEBI" id="CHEBI:59789"/>
    </ligand>
</feature>
<feature type="binding site" evidence="2">
    <location>
        <position position="276"/>
    </location>
    <ligand>
        <name>S-adenosyl-L-methionine</name>
        <dbReference type="ChEBI" id="CHEBI:59789"/>
    </ligand>
</feature>
<dbReference type="EC" id="2.1.1.232"/>
<dbReference type="EMBL" id="DP000011">
    <property type="protein sequence ID" value="ABA96874.1"/>
    <property type="status" value="ALT_SEQ"/>
    <property type="molecule type" value="Genomic_DNA"/>
</dbReference>
<dbReference type="EMBL" id="DP000011">
    <property type="protein sequence ID" value="ABA96875.1"/>
    <property type="status" value="ALT_SEQ"/>
    <property type="molecule type" value="Genomic_DNA"/>
</dbReference>
<dbReference type="EMBL" id="AP008218">
    <property type="protein sequence ID" value="BAF29496.2"/>
    <property type="molecule type" value="Genomic_DNA"/>
</dbReference>
<dbReference type="EMBL" id="AP014968">
    <property type="status" value="NOT_ANNOTATED_CDS"/>
    <property type="molecule type" value="Genomic_DNA"/>
</dbReference>
<dbReference type="SMR" id="Q0IP69"/>
<dbReference type="FunCoup" id="Q0IP69">
    <property type="interactions" value="74"/>
</dbReference>
<dbReference type="STRING" id="39947.Q0IP69"/>
<dbReference type="PaxDb" id="39947-Q0IP69"/>
<dbReference type="EnsemblPlants" id="Os12t0240900-01">
    <property type="protein sequence ID" value="Os12t0240900-01"/>
    <property type="gene ID" value="Os12g0240900"/>
</dbReference>
<dbReference type="Gramene" id="Os12t0240900-01">
    <property type="protein sequence ID" value="Os12t0240900-01"/>
    <property type="gene ID" value="Os12g0240900"/>
</dbReference>
<dbReference type="KEGG" id="dosa:Os12g0240900"/>
<dbReference type="eggNOG" id="KOG3178">
    <property type="taxonomic scope" value="Eukaryota"/>
</dbReference>
<dbReference type="InParanoid" id="Q0IP69"/>
<dbReference type="BioCyc" id="MetaCyc:MONOMER-11973"/>
<dbReference type="BRENDA" id="2.1.1.232">
    <property type="organism ID" value="4460"/>
</dbReference>
<dbReference type="PlantReactome" id="R-OSA-1119316">
    <property type="pathway name" value="Phenylpropanoid biosynthesis"/>
</dbReference>
<dbReference type="Proteomes" id="UP000000763">
    <property type="component" value="Chromosome 12"/>
</dbReference>
<dbReference type="Proteomes" id="UP000059680">
    <property type="component" value="Chromosome 12"/>
</dbReference>
<dbReference type="GO" id="GO:0008168">
    <property type="term" value="F:methyltransferase activity"/>
    <property type="evidence" value="ECO:0000314"/>
    <property type="project" value="CACAO"/>
</dbReference>
<dbReference type="GO" id="GO:0102766">
    <property type="term" value="F:naringenin 7-O-methyltransferase activity"/>
    <property type="evidence" value="ECO:0007669"/>
    <property type="project" value="UniProtKB-EC"/>
</dbReference>
<dbReference type="GO" id="GO:0008171">
    <property type="term" value="F:O-methyltransferase activity"/>
    <property type="evidence" value="ECO:0000318"/>
    <property type="project" value="GO_Central"/>
</dbReference>
<dbReference type="GO" id="GO:0046983">
    <property type="term" value="F:protein dimerization activity"/>
    <property type="evidence" value="ECO:0007669"/>
    <property type="project" value="InterPro"/>
</dbReference>
<dbReference type="GO" id="GO:0008757">
    <property type="term" value="F:S-adenosylmethionine-dependent methyltransferase activity"/>
    <property type="evidence" value="ECO:0000318"/>
    <property type="project" value="GO_Central"/>
</dbReference>
<dbReference type="GO" id="GO:0009058">
    <property type="term" value="P:biosynthetic process"/>
    <property type="evidence" value="ECO:0000318"/>
    <property type="project" value="GO_Central"/>
</dbReference>
<dbReference type="GO" id="GO:0032259">
    <property type="term" value="P:methylation"/>
    <property type="evidence" value="ECO:0000318"/>
    <property type="project" value="GO_Central"/>
</dbReference>
<dbReference type="FunFam" id="1.10.10.10:FF:000473">
    <property type="entry name" value="Caffeic acid O-methyltransferase"/>
    <property type="match status" value="1"/>
</dbReference>
<dbReference type="FunFam" id="3.40.50.150:FF:000061">
    <property type="entry name" value="Caffeic acid O-methyltransferase"/>
    <property type="match status" value="1"/>
</dbReference>
<dbReference type="Gene3D" id="3.40.50.150">
    <property type="entry name" value="Vaccinia Virus protein VP39"/>
    <property type="match status" value="1"/>
</dbReference>
<dbReference type="Gene3D" id="1.10.10.10">
    <property type="entry name" value="Winged helix-like DNA-binding domain superfamily/Winged helix DNA-binding domain"/>
    <property type="match status" value="1"/>
</dbReference>
<dbReference type="InterPro" id="IPR016461">
    <property type="entry name" value="COMT-like"/>
</dbReference>
<dbReference type="InterPro" id="IPR001077">
    <property type="entry name" value="O_MeTrfase_dom"/>
</dbReference>
<dbReference type="InterPro" id="IPR012967">
    <property type="entry name" value="Plant_O-MeTrfase_dimerisation"/>
</dbReference>
<dbReference type="InterPro" id="IPR029063">
    <property type="entry name" value="SAM-dependent_MTases_sf"/>
</dbReference>
<dbReference type="InterPro" id="IPR036388">
    <property type="entry name" value="WH-like_DNA-bd_sf"/>
</dbReference>
<dbReference type="InterPro" id="IPR036390">
    <property type="entry name" value="WH_DNA-bd_sf"/>
</dbReference>
<dbReference type="PANTHER" id="PTHR11746">
    <property type="entry name" value="O-METHYLTRANSFERASE"/>
    <property type="match status" value="1"/>
</dbReference>
<dbReference type="Pfam" id="PF08100">
    <property type="entry name" value="Dimerisation"/>
    <property type="match status" value="1"/>
</dbReference>
<dbReference type="Pfam" id="PF00891">
    <property type="entry name" value="Methyltransf_2"/>
    <property type="match status" value="1"/>
</dbReference>
<dbReference type="PIRSF" id="PIRSF005739">
    <property type="entry name" value="O-mtase"/>
    <property type="match status" value="1"/>
</dbReference>
<dbReference type="SUPFAM" id="SSF53335">
    <property type="entry name" value="S-adenosyl-L-methionine-dependent methyltransferases"/>
    <property type="match status" value="1"/>
</dbReference>
<dbReference type="SUPFAM" id="SSF46785">
    <property type="entry name" value="Winged helix' DNA-binding domain"/>
    <property type="match status" value="1"/>
</dbReference>
<dbReference type="PROSITE" id="PS51683">
    <property type="entry name" value="SAM_OMT_II"/>
    <property type="match status" value="1"/>
</dbReference>
<accession>Q0IP69</accession>
<accession>Q2QV72</accession>
<accession>Q2QV73</accession>
<sequence length="375" mass="39702">MVSPVVHRHAAGGGSGGDDDDQACMYALELLGGSVVSMTLKAAIELGLVDELLAAAGAAVTAEELAARLRLPAAVAAAAAVDRMLRLLASYGVVRCATEAGPDGKARRSYAAAPVCKWLAAGSSSGEGSMAPLGLLNLDKVFMENWYYLKEAVSEGGTAFDKAYGTSLFQYLGQDGNEPSNTLFNQAMASHSVVITNKLLQFFRGFDAGAGVDVLVDVGGGVGATLRMITARHPHLRGVNYDLPHVIAQAPPVEGVEHIGGSMFDHVPSGSAILLKWILHLWGDEECVKILKNCYKALPAKGKVILVEYVLPASPEATLAAQEAFRLDVMMLNRLAGGKERTQQEFTDLAVDAGFSGDCKPTYIFTNVWALEFTK</sequence>
<comment type="function">
    <text evidence="3">S-adenosyl-L-methionine-dependent methyltransferase involved in the biosynthesis of the sakuranetin, an inducible defense mechanism of O.sativa against pathogen attack.</text>
</comment>
<comment type="catalytic activity">
    <reaction evidence="3">
        <text>(2S)-naringenin + S-adenosyl-L-methionine = (2S)-sakuranetin + S-adenosyl-L-homocysteine + H(+)</text>
        <dbReference type="Rhea" id="RHEA:31539"/>
        <dbReference type="ChEBI" id="CHEBI:15378"/>
        <dbReference type="ChEBI" id="CHEBI:17846"/>
        <dbReference type="ChEBI" id="CHEBI:28927"/>
        <dbReference type="ChEBI" id="CHEBI:57856"/>
        <dbReference type="ChEBI" id="CHEBI:59789"/>
        <dbReference type="EC" id="2.1.1.232"/>
    </reaction>
</comment>
<comment type="biophysicochemical properties">
    <kinetics>
        <KM evidence="3">1.9 uM for naringenin</KM>
        <text>kcat is 25 sec(-1) with naringenin as substrate.</text>
    </kinetics>
</comment>
<comment type="induction">
    <text evidence="3">By jasmonic acid (JA). Up-regulated in leaves infected by the pathogen M.oryzae.</text>
</comment>
<comment type="similarity">
    <text evidence="2">Belongs to the class I-like SAM-binding methyltransferase superfamily. Cation-independent O-methyltransferase family. COMT subfamily.</text>
</comment>
<comment type="sequence caution" evidence="4">
    <conflict type="erroneous gene model prediction">
        <sequence resource="EMBL-CDS" id="ABA96874"/>
    </conflict>
    <text>Was originally thought to correspond to two different genes.</text>
</comment>
<comment type="sequence caution" evidence="4">
    <conflict type="erroneous gene model prediction">
        <sequence resource="EMBL-CDS" id="ABA96875"/>
    </conflict>
    <text>Was originally thought to correspond to two different genes.</text>
</comment>
<reference key="1">
    <citation type="journal article" date="2005" name="BMC Biol.">
        <title>The sequence of rice chromosomes 11 and 12, rich in disease resistance genes and recent gene duplications.</title>
        <authorList>
            <consortium name="The rice chromosomes 11 and 12 sequencing consortia"/>
        </authorList>
    </citation>
    <scope>NUCLEOTIDE SEQUENCE [LARGE SCALE GENOMIC DNA]</scope>
    <source>
        <strain>cv. Nipponbare</strain>
    </source>
</reference>
<reference key="2">
    <citation type="journal article" date="2005" name="Nature">
        <title>The map-based sequence of the rice genome.</title>
        <authorList>
            <consortium name="International rice genome sequencing project (IRGSP)"/>
        </authorList>
    </citation>
    <scope>NUCLEOTIDE SEQUENCE [LARGE SCALE GENOMIC DNA]</scope>
    <source>
        <strain>cv. Nipponbare</strain>
    </source>
</reference>
<reference key="3">
    <citation type="journal article" date="2008" name="Nucleic Acids Res.">
        <title>The rice annotation project database (RAP-DB): 2008 update.</title>
        <authorList>
            <consortium name="The rice annotation project (RAP)"/>
        </authorList>
    </citation>
    <scope>GENOME REANNOTATION</scope>
    <source>
        <strain>cv. Nipponbare</strain>
    </source>
</reference>
<reference key="4">
    <citation type="journal article" date="2013" name="Rice">
        <title>Improvement of the Oryza sativa Nipponbare reference genome using next generation sequence and optical map data.</title>
        <authorList>
            <person name="Kawahara Y."/>
            <person name="de la Bastide M."/>
            <person name="Hamilton J.P."/>
            <person name="Kanamori H."/>
            <person name="McCombie W.R."/>
            <person name="Ouyang S."/>
            <person name="Schwartz D.C."/>
            <person name="Tanaka T."/>
            <person name="Wu J."/>
            <person name="Zhou S."/>
            <person name="Childs K.L."/>
            <person name="Davidson R.M."/>
            <person name="Lin H."/>
            <person name="Quesada-Ocampo L."/>
            <person name="Vaillancourt B."/>
            <person name="Sakai H."/>
            <person name="Lee S.S."/>
            <person name="Kim J."/>
            <person name="Numa H."/>
            <person name="Itoh T."/>
            <person name="Buell C.R."/>
            <person name="Matsumoto T."/>
        </authorList>
    </citation>
    <scope>GENOME REANNOTATION</scope>
    <source>
        <strain>cv. Nipponbare</strain>
    </source>
</reference>
<reference key="5">
    <citation type="journal article" date="2012" name="J. Biol. Chem.">
        <title>Purification and identification of naringenin 7-o-methyltransferase, a key enzyme in biosynthesis of flavonoid phytoalexin sakuranetin in rice.</title>
        <authorList>
            <person name="Shimizu T."/>
            <person name="Lin F."/>
            <person name="Hasegawa M."/>
            <person name="Okada K."/>
            <person name="Nojiri H."/>
            <person name="Yamane H."/>
        </authorList>
    </citation>
    <scope>IDENTIFICATION BY MASS SPECTROMETRY</scope>
    <scope>FUNCTION</scope>
    <scope>CATALYTIC ACTIVITY</scope>
    <scope>BIOPHYSICOCHEMICAL PROPERTIES</scope>
    <scope>INDUCTION</scope>
</reference>
<gene>
    <name type="ordered locus">Os12g0240900</name>
    <name type="ordered locus">LOC_Os12g13810</name>
</gene>
<protein>
    <recommendedName>
        <fullName>Naringenin 7-O-methyltransferase</fullName>
        <shortName>NOMT</shortName>
        <shortName>OsNOMT</shortName>
        <ecNumber>2.1.1.232</ecNumber>
    </recommendedName>
</protein>
<evidence type="ECO:0000250" key="1"/>
<evidence type="ECO:0000255" key="2">
    <source>
        <dbReference type="PROSITE-ProRule" id="PRU01020"/>
    </source>
</evidence>
<evidence type="ECO:0000269" key="3">
    <source>
    </source>
</evidence>
<evidence type="ECO:0000305" key="4"/>
<keyword id="KW-0489">Methyltransferase</keyword>
<keyword id="KW-1185">Reference proteome</keyword>
<keyword id="KW-0949">S-adenosyl-L-methionine</keyword>
<keyword id="KW-0808">Transferase</keyword>